<reference key="1">
    <citation type="journal article" date="2009" name="PLoS Genet.">
        <title>Organised genome dynamics in the Escherichia coli species results in highly diverse adaptive paths.</title>
        <authorList>
            <person name="Touchon M."/>
            <person name="Hoede C."/>
            <person name="Tenaillon O."/>
            <person name="Barbe V."/>
            <person name="Baeriswyl S."/>
            <person name="Bidet P."/>
            <person name="Bingen E."/>
            <person name="Bonacorsi S."/>
            <person name="Bouchier C."/>
            <person name="Bouvet O."/>
            <person name="Calteau A."/>
            <person name="Chiapello H."/>
            <person name="Clermont O."/>
            <person name="Cruveiller S."/>
            <person name="Danchin A."/>
            <person name="Diard M."/>
            <person name="Dossat C."/>
            <person name="Karoui M.E."/>
            <person name="Frapy E."/>
            <person name="Garry L."/>
            <person name="Ghigo J.M."/>
            <person name="Gilles A.M."/>
            <person name="Johnson J."/>
            <person name="Le Bouguenec C."/>
            <person name="Lescat M."/>
            <person name="Mangenot S."/>
            <person name="Martinez-Jehanne V."/>
            <person name="Matic I."/>
            <person name="Nassif X."/>
            <person name="Oztas S."/>
            <person name="Petit M.A."/>
            <person name="Pichon C."/>
            <person name="Rouy Z."/>
            <person name="Ruf C.S."/>
            <person name="Schneider D."/>
            <person name="Tourret J."/>
            <person name="Vacherie B."/>
            <person name="Vallenet D."/>
            <person name="Medigue C."/>
            <person name="Rocha E.P.C."/>
            <person name="Denamur E."/>
        </authorList>
    </citation>
    <scope>NUCLEOTIDE SEQUENCE [LARGE SCALE GENOMIC DNA]</scope>
    <source>
        <strain>55989 / EAEC</strain>
    </source>
</reference>
<feature type="chain" id="PRO_0000382458" description="Probable 4-amino-4-deoxy-L-arabinose-phosphoundecaprenol flippase subunit ArnF">
    <location>
        <begin position="1"/>
        <end position="128"/>
    </location>
</feature>
<feature type="topological domain" description="Cytoplasmic" evidence="1">
    <location>
        <begin position="1"/>
        <end position="2"/>
    </location>
</feature>
<feature type="transmembrane region" description="Helical" evidence="1">
    <location>
        <begin position="3"/>
        <end position="23"/>
    </location>
</feature>
<feature type="topological domain" description="Periplasmic" evidence="1">
    <location>
        <begin position="24"/>
        <end position="35"/>
    </location>
</feature>
<feature type="transmembrane region" description="Helical" evidence="1">
    <location>
        <begin position="36"/>
        <end position="56"/>
    </location>
</feature>
<feature type="topological domain" description="Cytoplasmic" evidence="1">
    <location>
        <begin position="57"/>
        <end position="76"/>
    </location>
</feature>
<feature type="transmembrane region" description="Helical" evidence="1">
    <location>
        <begin position="77"/>
        <end position="97"/>
    </location>
</feature>
<feature type="topological domain" description="Periplasmic" evidence="1">
    <location>
        <begin position="98"/>
        <end position="100"/>
    </location>
</feature>
<feature type="transmembrane region" description="Helical" evidence="1">
    <location>
        <begin position="101"/>
        <end position="121"/>
    </location>
</feature>
<feature type="topological domain" description="Cytoplasmic" evidence="1">
    <location>
        <begin position="122"/>
        <end position="128"/>
    </location>
</feature>
<sequence>MGLMWGLFSVIIASVAQLSLGFAASHLPPMTHLWDFIAALLAFGLDARILLLGLLGYLLSVFCWYKTLHKLALSKAYALLSMSYVLVWIASMVLPGWEGTFSLKALLGVACIMSGLMLIFLPMTKQRY</sequence>
<keyword id="KW-0997">Cell inner membrane</keyword>
<keyword id="KW-1003">Cell membrane</keyword>
<keyword id="KW-0441">Lipid A biosynthesis</keyword>
<keyword id="KW-0444">Lipid biosynthesis</keyword>
<keyword id="KW-0443">Lipid metabolism</keyword>
<keyword id="KW-0448">Lipopolysaccharide biosynthesis</keyword>
<keyword id="KW-0472">Membrane</keyword>
<keyword id="KW-1185">Reference proteome</keyword>
<keyword id="KW-0812">Transmembrane</keyword>
<keyword id="KW-1133">Transmembrane helix</keyword>
<keyword id="KW-0813">Transport</keyword>
<evidence type="ECO:0000255" key="1">
    <source>
        <dbReference type="HAMAP-Rule" id="MF_00538"/>
    </source>
</evidence>
<protein>
    <recommendedName>
        <fullName evidence="1">Probable 4-amino-4-deoxy-L-arabinose-phosphoundecaprenol flippase subunit ArnF</fullName>
        <shortName evidence="1">L-Ara4N-phosphoundecaprenol flippase subunit ArnF</shortName>
    </recommendedName>
    <alternativeName>
        <fullName evidence="1">Undecaprenyl phosphate-aminoarabinose flippase subunit ArnF</fullName>
    </alternativeName>
</protein>
<comment type="function">
    <text evidence="1">Translocates 4-amino-4-deoxy-L-arabinose-phosphoundecaprenol (alpha-L-Ara4N-phosphoundecaprenol) from the cytoplasmic to the periplasmic side of the inner membrane.</text>
</comment>
<comment type="pathway">
    <text evidence="1">Bacterial outer membrane biogenesis; lipopolysaccharide biosynthesis.</text>
</comment>
<comment type="subunit">
    <text evidence="1">Heterodimer of ArnE and ArnF.</text>
</comment>
<comment type="subcellular location">
    <subcellularLocation>
        <location evidence="1">Cell inner membrane</location>
        <topology evidence="1">Multi-pass membrane protein</topology>
    </subcellularLocation>
</comment>
<comment type="similarity">
    <text evidence="1">Belongs to the ArnF family.</text>
</comment>
<proteinExistence type="inferred from homology"/>
<accession>B7LAS4</accession>
<gene>
    <name evidence="1" type="primary">arnF</name>
    <name type="ordered locus">EC55989_2506</name>
</gene>
<dbReference type="EMBL" id="CU928145">
    <property type="protein sequence ID" value="CAU98374.1"/>
    <property type="molecule type" value="Genomic_DNA"/>
</dbReference>
<dbReference type="RefSeq" id="WP_000523879.1">
    <property type="nucleotide sequence ID" value="NC_011748.1"/>
</dbReference>
<dbReference type="KEGG" id="eck:EC55989_2506"/>
<dbReference type="HOGENOM" id="CLU_131462_1_0_6"/>
<dbReference type="UniPathway" id="UPA00030"/>
<dbReference type="Proteomes" id="UP000000746">
    <property type="component" value="Chromosome"/>
</dbReference>
<dbReference type="GO" id="GO:0005886">
    <property type="term" value="C:plasma membrane"/>
    <property type="evidence" value="ECO:0007669"/>
    <property type="project" value="UniProtKB-SubCell"/>
</dbReference>
<dbReference type="GO" id="GO:1901505">
    <property type="term" value="F:carbohydrate derivative transmembrane transporter activity"/>
    <property type="evidence" value="ECO:0007669"/>
    <property type="project" value="InterPro"/>
</dbReference>
<dbReference type="GO" id="GO:0009245">
    <property type="term" value="P:lipid A biosynthetic process"/>
    <property type="evidence" value="ECO:0007669"/>
    <property type="project" value="UniProtKB-UniRule"/>
</dbReference>
<dbReference type="GO" id="GO:0009103">
    <property type="term" value="P:lipopolysaccharide biosynthetic process"/>
    <property type="evidence" value="ECO:0007669"/>
    <property type="project" value="UniProtKB-UniRule"/>
</dbReference>
<dbReference type="FunFam" id="1.10.3730.20:FF:000003">
    <property type="entry name" value="Probable 4-amino-4-deoxy-L-arabinose-phosphoundecaprenol flippase subunit ArnF"/>
    <property type="match status" value="1"/>
</dbReference>
<dbReference type="Gene3D" id="1.10.3730.20">
    <property type="match status" value="1"/>
</dbReference>
<dbReference type="HAMAP" id="MF_00538">
    <property type="entry name" value="Flippase_ArnF"/>
    <property type="match status" value="1"/>
</dbReference>
<dbReference type="InterPro" id="IPR022832">
    <property type="entry name" value="Flippase_ArnF"/>
</dbReference>
<dbReference type="InterPro" id="IPR000390">
    <property type="entry name" value="Small_drug/metabolite_transptr"/>
</dbReference>
<dbReference type="NCBIfam" id="NF002816">
    <property type="entry name" value="PRK02971.1-2"/>
    <property type="match status" value="1"/>
</dbReference>
<dbReference type="PANTHER" id="PTHR30561:SF9">
    <property type="entry name" value="4-AMINO-4-DEOXY-L-ARABINOSE-PHOSPHOUNDECAPRENOL FLIPPASE SUBUNIT ARNF-RELATED"/>
    <property type="match status" value="1"/>
</dbReference>
<dbReference type="PANTHER" id="PTHR30561">
    <property type="entry name" value="SMR FAMILY PROTON-DEPENDENT DRUG EFFLUX TRANSPORTER SUGE"/>
    <property type="match status" value="1"/>
</dbReference>
<dbReference type="SUPFAM" id="SSF103481">
    <property type="entry name" value="Multidrug resistance efflux transporter EmrE"/>
    <property type="match status" value="1"/>
</dbReference>
<organism>
    <name type="scientific">Escherichia coli (strain 55989 / EAEC)</name>
    <dbReference type="NCBI Taxonomy" id="585055"/>
    <lineage>
        <taxon>Bacteria</taxon>
        <taxon>Pseudomonadati</taxon>
        <taxon>Pseudomonadota</taxon>
        <taxon>Gammaproteobacteria</taxon>
        <taxon>Enterobacterales</taxon>
        <taxon>Enterobacteriaceae</taxon>
        <taxon>Escherichia</taxon>
    </lineage>
</organism>
<name>ARNF_ECO55</name>